<evidence type="ECO:0000250" key="1"/>
<evidence type="ECO:0000250" key="2">
    <source>
        <dbReference type="UniProtKB" id="Q969X5"/>
    </source>
</evidence>
<evidence type="ECO:0000255" key="3"/>
<evidence type="ECO:0000305" key="4"/>
<feature type="chain" id="PRO_0000087024" description="Endoplasmic reticulum-Golgi intermediate compartment protein 1">
    <location>
        <begin position="1"/>
        <end position="290"/>
    </location>
</feature>
<feature type="topological domain" description="Cytoplasmic" evidence="3">
    <location>
        <begin position="1"/>
        <end position="26"/>
    </location>
</feature>
<feature type="transmembrane region" description="Helical" evidence="3">
    <location>
        <begin position="27"/>
        <end position="47"/>
    </location>
</feature>
<feature type="topological domain" description="Lumenal" evidence="3">
    <location>
        <begin position="48"/>
        <end position="254"/>
    </location>
</feature>
<feature type="transmembrane region" description="Helical" evidence="3">
    <location>
        <begin position="255"/>
        <end position="275"/>
    </location>
</feature>
<feature type="topological domain" description="Cytoplasmic" evidence="3">
    <location>
        <begin position="276"/>
        <end position="290"/>
    </location>
</feature>
<feature type="glycosylation site" description="N-linked (GlcNAc...) asparagine" evidence="1">
    <location>
        <position position="74"/>
    </location>
</feature>
<reference key="1">
    <citation type="journal article" date="2005" name="Science">
        <title>The transcriptional landscape of the mammalian genome.</title>
        <authorList>
            <person name="Carninci P."/>
            <person name="Kasukawa T."/>
            <person name="Katayama S."/>
            <person name="Gough J."/>
            <person name="Frith M.C."/>
            <person name="Maeda N."/>
            <person name="Oyama R."/>
            <person name="Ravasi T."/>
            <person name="Lenhard B."/>
            <person name="Wells C."/>
            <person name="Kodzius R."/>
            <person name="Shimokawa K."/>
            <person name="Bajic V.B."/>
            <person name="Brenner S.E."/>
            <person name="Batalov S."/>
            <person name="Forrest A.R."/>
            <person name="Zavolan M."/>
            <person name="Davis M.J."/>
            <person name="Wilming L.G."/>
            <person name="Aidinis V."/>
            <person name="Allen J.E."/>
            <person name="Ambesi-Impiombato A."/>
            <person name="Apweiler R."/>
            <person name="Aturaliya R.N."/>
            <person name="Bailey T.L."/>
            <person name="Bansal M."/>
            <person name="Baxter L."/>
            <person name="Beisel K.W."/>
            <person name="Bersano T."/>
            <person name="Bono H."/>
            <person name="Chalk A.M."/>
            <person name="Chiu K.P."/>
            <person name="Choudhary V."/>
            <person name="Christoffels A."/>
            <person name="Clutterbuck D.R."/>
            <person name="Crowe M.L."/>
            <person name="Dalla E."/>
            <person name="Dalrymple B.P."/>
            <person name="de Bono B."/>
            <person name="Della Gatta G."/>
            <person name="di Bernardo D."/>
            <person name="Down T."/>
            <person name="Engstrom P."/>
            <person name="Fagiolini M."/>
            <person name="Faulkner G."/>
            <person name="Fletcher C.F."/>
            <person name="Fukushima T."/>
            <person name="Furuno M."/>
            <person name="Futaki S."/>
            <person name="Gariboldi M."/>
            <person name="Georgii-Hemming P."/>
            <person name="Gingeras T.R."/>
            <person name="Gojobori T."/>
            <person name="Green R.E."/>
            <person name="Gustincich S."/>
            <person name="Harbers M."/>
            <person name="Hayashi Y."/>
            <person name="Hensch T.K."/>
            <person name="Hirokawa N."/>
            <person name="Hill D."/>
            <person name="Huminiecki L."/>
            <person name="Iacono M."/>
            <person name="Ikeo K."/>
            <person name="Iwama A."/>
            <person name="Ishikawa T."/>
            <person name="Jakt M."/>
            <person name="Kanapin A."/>
            <person name="Katoh M."/>
            <person name="Kawasawa Y."/>
            <person name="Kelso J."/>
            <person name="Kitamura H."/>
            <person name="Kitano H."/>
            <person name="Kollias G."/>
            <person name="Krishnan S.P."/>
            <person name="Kruger A."/>
            <person name="Kummerfeld S.K."/>
            <person name="Kurochkin I.V."/>
            <person name="Lareau L.F."/>
            <person name="Lazarevic D."/>
            <person name="Lipovich L."/>
            <person name="Liu J."/>
            <person name="Liuni S."/>
            <person name="McWilliam S."/>
            <person name="Madan Babu M."/>
            <person name="Madera M."/>
            <person name="Marchionni L."/>
            <person name="Matsuda H."/>
            <person name="Matsuzawa S."/>
            <person name="Miki H."/>
            <person name="Mignone F."/>
            <person name="Miyake S."/>
            <person name="Morris K."/>
            <person name="Mottagui-Tabar S."/>
            <person name="Mulder N."/>
            <person name="Nakano N."/>
            <person name="Nakauchi H."/>
            <person name="Ng P."/>
            <person name="Nilsson R."/>
            <person name="Nishiguchi S."/>
            <person name="Nishikawa S."/>
            <person name="Nori F."/>
            <person name="Ohara O."/>
            <person name="Okazaki Y."/>
            <person name="Orlando V."/>
            <person name="Pang K.C."/>
            <person name="Pavan W.J."/>
            <person name="Pavesi G."/>
            <person name="Pesole G."/>
            <person name="Petrovsky N."/>
            <person name="Piazza S."/>
            <person name="Reed J."/>
            <person name="Reid J.F."/>
            <person name="Ring B.Z."/>
            <person name="Ringwald M."/>
            <person name="Rost B."/>
            <person name="Ruan Y."/>
            <person name="Salzberg S.L."/>
            <person name="Sandelin A."/>
            <person name="Schneider C."/>
            <person name="Schoenbach C."/>
            <person name="Sekiguchi K."/>
            <person name="Semple C.A."/>
            <person name="Seno S."/>
            <person name="Sessa L."/>
            <person name="Sheng Y."/>
            <person name="Shibata Y."/>
            <person name="Shimada H."/>
            <person name="Shimada K."/>
            <person name="Silva D."/>
            <person name="Sinclair B."/>
            <person name="Sperling S."/>
            <person name="Stupka E."/>
            <person name="Sugiura K."/>
            <person name="Sultana R."/>
            <person name="Takenaka Y."/>
            <person name="Taki K."/>
            <person name="Tammoja K."/>
            <person name="Tan S.L."/>
            <person name="Tang S."/>
            <person name="Taylor M.S."/>
            <person name="Tegner J."/>
            <person name="Teichmann S.A."/>
            <person name="Ueda H.R."/>
            <person name="van Nimwegen E."/>
            <person name="Verardo R."/>
            <person name="Wei C.L."/>
            <person name="Yagi K."/>
            <person name="Yamanishi H."/>
            <person name="Zabarovsky E."/>
            <person name="Zhu S."/>
            <person name="Zimmer A."/>
            <person name="Hide W."/>
            <person name="Bult C."/>
            <person name="Grimmond S.M."/>
            <person name="Teasdale R.D."/>
            <person name="Liu E.T."/>
            <person name="Brusic V."/>
            <person name="Quackenbush J."/>
            <person name="Wahlestedt C."/>
            <person name="Mattick J.S."/>
            <person name="Hume D.A."/>
            <person name="Kai C."/>
            <person name="Sasaki D."/>
            <person name="Tomaru Y."/>
            <person name="Fukuda S."/>
            <person name="Kanamori-Katayama M."/>
            <person name="Suzuki M."/>
            <person name="Aoki J."/>
            <person name="Arakawa T."/>
            <person name="Iida J."/>
            <person name="Imamura K."/>
            <person name="Itoh M."/>
            <person name="Kato T."/>
            <person name="Kawaji H."/>
            <person name="Kawagashira N."/>
            <person name="Kawashima T."/>
            <person name="Kojima M."/>
            <person name="Kondo S."/>
            <person name="Konno H."/>
            <person name="Nakano K."/>
            <person name="Ninomiya N."/>
            <person name="Nishio T."/>
            <person name="Okada M."/>
            <person name="Plessy C."/>
            <person name="Shibata K."/>
            <person name="Shiraki T."/>
            <person name="Suzuki S."/>
            <person name="Tagami M."/>
            <person name="Waki K."/>
            <person name="Watahiki A."/>
            <person name="Okamura-Oho Y."/>
            <person name="Suzuki H."/>
            <person name="Kawai J."/>
            <person name="Hayashizaki Y."/>
        </authorList>
    </citation>
    <scope>NUCLEOTIDE SEQUENCE [LARGE SCALE MRNA]</scope>
    <source>
        <strain>C57BL/6J</strain>
        <strain>NOD</strain>
        <tissue>Eye</tissue>
        <tissue>Lung</tissue>
        <tissue>Thymus</tissue>
    </source>
</reference>
<reference key="2">
    <citation type="journal article" date="2004" name="Genome Res.">
        <title>The status, quality, and expansion of the NIH full-length cDNA project: the Mammalian Gene Collection (MGC).</title>
        <authorList>
            <consortium name="The MGC Project Team"/>
        </authorList>
    </citation>
    <scope>NUCLEOTIDE SEQUENCE [LARGE SCALE MRNA]</scope>
    <source>
        <strain>C57BL/6J</strain>
        <strain>Czech II</strain>
        <tissue>Embryo</tissue>
        <tissue>Mammary tumor</tissue>
    </source>
</reference>
<reference key="3">
    <citation type="submission" date="2007-04" db="UniProtKB">
        <authorList>
            <person name="Lubec G."/>
            <person name="Kang S.U."/>
        </authorList>
    </citation>
    <scope>PROTEIN SEQUENCE OF 191-199</scope>
    <scope>IDENTIFICATION BY MASS SPECTROMETRY</scope>
    <source>
        <strain>C57BL/6J</strain>
        <tissue>Brain</tissue>
    </source>
</reference>
<reference key="4">
    <citation type="journal article" date="2010" name="Cell">
        <title>A tissue-specific atlas of mouse protein phosphorylation and expression.</title>
        <authorList>
            <person name="Huttlin E.L."/>
            <person name="Jedrychowski M.P."/>
            <person name="Elias J.E."/>
            <person name="Goswami T."/>
            <person name="Rad R."/>
            <person name="Beausoleil S.A."/>
            <person name="Villen J."/>
            <person name="Haas W."/>
            <person name="Sowa M.E."/>
            <person name="Gygi S.P."/>
        </authorList>
    </citation>
    <scope>IDENTIFICATION BY MASS SPECTROMETRY [LARGE SCALE ANALYSIS]</scope>
    <source>
        <tissue>Brain</tissue>
        <tissue>Brown adipose tissue</tissue>
        <tissue>Kidney</tissue>
        <tissue>Liver</tissue>
        <tissue>Lung</tissue>
        <tissue>Pancreas</tissue>
        <tissue>Testis</tissue>
    </source>
</reference>
<protein>
    <recommendedName>
        <fullName>Endoplasmic reticulum-Golgi intermediate compartment protein 1</fullName>
    </recommendedName>
    <alternativeName>
        <fullName>ER-Golgi intermediate compartment 32 kDa protein</fullName>
        <shortName>ERGIC-32</shortName>
    </alternativeName>
</protein>
<proteinExistence type="evidence at protein level"/>
<accession>Q9DC16</accession>
<sequence>MPFDFRRFDIYRKVPKDLTQPTYTGAIISICCCLFILFLFLSELTGFITTEVVNELYVDDPDKDSGGKIDVSLNISLPNLHCELVGLDIQDEMGRHEVGHIDNSMKIPLNNGAGCRFEGQFSINKVPGNFHVSTHSATAQPQNPDMTHTIHKLSFGDTLQVQNVHGAFNALGGADRLTSNPLASHDYILKIVPTVYEDKSGKQRYSYQYTVANKEYVAYSHTGRIIPAIWFRYDLSPITVKYTERRQPLYRFITTICAIIGGTFTVAGILDSCIFTASEAWKKIQLGKIH</sequence>
<keyword id="KW-0903">Direct protein sequencing</keyword>
<keyword id="KW-0256">Endoplasmic reticulum</keyword>
<keyword id="KW-0931">ER-Golgi transport</keyword>
<keyword id="KW-0325">Glycoprotein</keyword>
<keyword id="KW-0333">Golgi apparatus</keyword>
<keyword id="KW-0472">Membrane</keyword>
<keyword id="KW-1185">Reference proteome</keyword>
<keyword id="KW-0812">Transmembrane</keyword>
<keyword id="KW-1133">Transmembrane helix</keyword>
<keyword id="KW-0813">Transport</keyword>
<organism>
    <name type="scientific">Mus musculus</name>
    <name type="common">Mouse</name>
    <dbReference type="NCBI Taxonomy" id="10090"/>
    <lineage>
        <taxon>Eukaryota</taxon>
        <taxon>Metazoa</taxon>
        <taxon>Chordata</taxon>
        <taxon>Craniata</taxon>
        <taxon>Vertebrata</taxon>
        <taxon>Euteleostomi</taxon>
        <taxon>Mammalia</taxon>
        <taxon>Eutheria</taxon>
        <taxon>Euarchontoglires</taxon>
        <taxon>Glires</taxon>
        <taxon>Rodentia</taxon>
        <taxon>Myomorpha</taxon>
        <taxon>Muroidea</taxon>
        <taxon>Muridae</taxon>
        <taxon>Murinae</taxon>
        <taxon>Mus</taxon>
        <taxon>Mus</taxon>
    </lineage>
</organism>
<dbReference type="EMBL" id="AK004629">
    <property type="protein sequence ID" value="BAB23423.1"/>
    <property type="molecule type" value="mRNA"/>
</dbReference>
<dbReference type="EMBL" id="AK084385">
    <property type="protein sequence ID" value="BAC39170.1"/>
    <property type="molecule type" value="mRNA"/>
</dbReference>
<dbReference type="EMBL" id="AK088157">
    <property type="protein sequence ID" value="BAC40179.1"/>
    <property type="molecule type" value="mRNA"/>
</dbReference>
<dbReference type="EMBL" id="BC005516">
    <property type="protein sequence ID" value="AAH05516.1"/>
    <property type="molecule type" value="mRNA"/>
</dbReference>
<dbReference type="EMBL" id="BC083144">
    <property type="protein sequence ID" value="AAH83144.1"/>
    <property type="molecule type" value="mRNA"/>
</dbReference>
<dbReference type="CCDS" id="CCDS28553.1"/>
<dbReference type="RefSeq" id="NP_080446.1">
    <property type="nucleotide sequence ID" value="NM_026170.3"/>
</dbReference>
<dbReference type="SMR" id="Q9DC16"/>
<dbReference type="BioGRID" id="212202">
    <property type="interactions" value="6"/>
</dbReference>
<dbReference type="FunCoup" id="Q9DC16">
    <property type="interactions" value="2160"/>
</dbReference>
<dbReference type="IntAct" id="Q9DC16">
    <property type="interactions" value="2"/>
</dbReference>
<dbReference type="STRING" id="10090.ENSMUSP00000132922"/>
<dbReference type="GlyCosmos" id="Q9DC16">
    <property type="glycosylation" value="1 site, No reported glycans"/>
</dbReference>
<dbReference type="GlyGen" id="Q9DC16">
    <property type="glycosylation" value="1 site, 1 N-linked glycan (1 site)"/>
</dbReference>
<dbReference type="iPTMnet" id="Q9DC16"/>
<dbReference type="PhosphoSitePlus" id="Q9DC16"/>
<dbReference type="SwissPalm" id="Q9DC16"/>
<dbReference type="jPOST" id="Q9DC16"/>
<dbReference type="PaxDb" id="10090-ENSMUSP00000132922"/>
<dbReference type="ProteomicsDB" id="275883"/>
<dbReference type="Pumba" id="Q9DC16"/>
<dbReference type="TopDownProteomics" id="Q9DC16"/>
<dbReference type="Antibodypedia" id="17012">
    <property type="antibodies" value="75 antibodies from 18 providers"/>
</dbReference>
<dbReference type="Ensembl" id="ENSMUST00000167662.8">
    <property type="protein sequence ID" value="ENSMUSP00000132922.2"/>
    <property type="gene ID" value="ENSMUSG00000001576.16"/>
</dbReference>
<dbReference type="GeneID" id="67458"/>
<dbReference type="KEGG" id="mmu:67458"/>
<dbReference type="UCSC" id="uc008bef.1">
    <property type="organism name" value="mouse"/>
</dbReference>
<dbReference type="AGR" id="MGI:1914708"/>
<dbReference type="CTD" id="57222"/>
<dbReference type="MGI" id="MGI:1914708">
    <property type="gene designation" value="Ergic1"/>
</dbReference>
<dbReference type="VEuPathDB" id="HostDB:ENSMUSG00000001576"/>
<dbReference type="eggNOG" id="KOG2667">
    <property type="taxonomic scope" value="Eukaryota"/>
</dbReference>
<dbReference type="GeneTree" id="ENSGT00530000063113"/>
<dbReference type="HOGENOM" id="CLU_034705_0_1_1"/>
<dbReference type="InParanoid" id="Q9DC16"/>
<dbReference type="OMA" id="IIPAVWF"/>
<dbReference type="OrthoDB" id="270930at2759"/>
<dbReference type="PhylomeDB" id="Q9DC16"/>
<dbReference type="TreeFam" id="TF354253"/>
<dbReference type="BioGRID-ORCS" id="67458">
    <property type="hits" value="0 hits in 76 CRISPR screens"/>
</dbReference>
<dbReference type="ChiTaRS" id="Ergic1">
    <property type="organism name" value="mouse"/>
</dbReference>
<dbReference type="PRO" id="PR:Q9DC16"/>
<dbReference type="Proteomes" id="UP000000589">
    <property type="component" value="Chromosome 17"/>
</dbReference>
<dbReference type="RNAct" id="Q9DC16">
    <property type="molecule type" value="protein"/>
</dbReference>
<dbReference type="Bgee" id="ENSMUSG00000001576">
    <property type="expression patterns" value="Expressed in ascending aorta and 262 other cell types or tissues"/>
</dbReference>
<dbReference type="ExpressionAtlas" id="Q9DC16">
    <property type="expression patterns" value="baseline and differential"/>
</dbReference>
<dbReference type="GO" id="GO:0005789">
    <property type="term" value="C:endoplasmic reticulum membrane"/>
    <property type="evidence" value="ECO:0007669"/>
    <property type="project" value="UniProtKB-SubCell"/>
</dbReference>
<dbReference type="GO" id="GO:0033116">
    <property type="term" value="C:endoplasmic reticulum-Golgi intermediate compartment membrane"/>
    <property type="evidence" value="ECO:0007669"/>
    <property type="project" value="UniProtKB-SubCell"/>
</dbReference>
<dbReference type="GO" id="GO:0000139">
    <property type="term" value="C:Golgi membrane"/>
    <property type="evidence" value="ECO:0007669"/>
    <property type="project" value="UniProtKB-SubCell"/>
</dbReference>
<dbReference type="GO" id="GO:0005654">
    <property type="term" value="C:nucleoplasm"/>
    <property type="evidence" value="ECO:0007669"/>
    <property type="project" value="Ensembl"/>
</dbReference>
<dbReference type="GO" id="GO:0006888">
    <property type="term" value="P:endoplasmic reticulum to Golgi vesicle-mediated transport"/>
    <property type="evidence" value="ECO:0007669"/>
    <property type="project" value="Ensembl"/>
</dbReference>
<dbReference type="InterPro" id="IPR045888">
    <property type="entry name" value="Erv"/>
</dbReference>
<dbReference type="InterPro" id="IPR012936">
    <property type="entry name" value="Erv_C"/>
</dbReference>
<dbReference type="InterPro" id="IPR039542">
    <property type="entry name" value="Erv_N"/>
</dbReference>
<dbReference type="PANTHER" id="PTHR10984">
    <property type="entry name" value="ENDOPLASMIC RETICULUM-GOLGI INTERMEDIATE COMPARTMENT PROTEIN"/>
    <property type="match status" value="1"/>
</dbReference>
<dbReference type="PANTHER" id="PTHR10984:SF36">
    <property type="entry name" value="ENDOPLASMIC RETICULUM-GOLGI INTERMEDIATE COMPARTMENT PROTEIN 1"/>
    <property type="match status" value="1"/>
</dbReference>
<dbReference type="Pfam" id="PF07970">
    <property type="entry name" value="COPIIcoated_ERV"/>
    <property type="match status" value="1"/>
</dbReference>
<dbReference type="Pfam" id="PF13850">
    <property type="entry name" value="ERGIC_N"/>
    <property type="match status" value="1"/>
</dbReference>
<gene>
    <name type="primary">Ergic1</name>
    <name type="synonym">Ergic32</name>
</gene>
<name>ERGI1_MOUSE</name>
<comment type="function">
    <text evidence="1">Possible role in transport between endoplasmic reticulum and Golgi.</text>
</comment>
<comment type="subunit">
    <text evidence="2">May form a heteromeric complex composed of ERGIC1, ERGIC2 and ERGIC3 (By similarity). Within the complex, the interaction with ERGIC3 is direct (By similarity). Interacts with ERGIC3/ERV46 (By similarity).</text>
</comment>
<comment type="subcellular location">
    <subcellularLocation>
        <location evidence="1">Endoplasmic reticulum membrane</location>
        <topology evidence="1">Multi-pass membrane protein</topology>
    </subcellularLocation>
    <subcellularLocation>
        <location evidence="1">Endoplasmic reticulum-Golgi intermediate compartment membrane</location>
        <topology evidence="1">Multi-pass membrane protein</topology>
    </subcellularLocation>
    <subcellularLocation>
        <location evidence="1">Golgi apparatus membrane</location>
        <topology evidence="1">Multi-pass membrane protein</topology>
    </subcellularLocation>
    <text evidence="1">Cycles between the endoplasmic reticulum and the Golgi.</text>
</comment>
<comment type="PTM">
    <text evidence="1">N-glycosylated.</text>
</comment>
<comment type="similarity">
    <text evidence="4">Belongs to the ERGIC family.</text>
</comment>